<protein>
    <recommendedName>
        <fullName>Elongation factor 1-beta</fullName>
        <shortName>EF-1-beta</shortName>
    </recommendedName>
    <alternativeName>
        <fullName>aEF-1beta</fullName>
    </alternativeName>
</protein>
<comment type="function">
    <text evidence="1">Promotes the exchange of GDP for GTP in EF-1-alpha/GDP, thus allowing the regeneration of EF-1-alpha/GTP that could then be used to form the ternary complex EF-1-alpha/GTP/AAtRNA.</text>
</comment>
<comment type="similarity">
    <text evidence="2">Belongs to the EF-1-beta/EF-1-delta family.</text>
</comment>
<feature type="chain" id="PRO_0000155053" description="Elongation factor 1-beta">
    <location>
        <begin position="1"/>
        <end position="90"/>
    </location>
</feature>
<dbReference type="EMBL" id="BA000002">
    <property type="protein sequence ID" value="BAA81496.2"/>
    <property type="molecule type" value="Genomic_DNA"/>
</dbReference>
<dbReference type="PIR" id="H72479">
    <property type="entry name" value="H72479"/>
</dbReference>
<dbReference type="RefSeq" id="WP_010867035.1">
    <property type="nucleotide sequence ID" value="NC_000854.2"/>
</dbReference>
<dbReference type="SMR" id="Q9Y904"/>
<dbReference type="STRING" id="272557.APE_2480.1"/>
<dbReference type="EnsemblBacteria" id="BAA81496">
    <property type="protein sequence ID" value="BAA81496"/>
    <property type="gene ID" value="APE_2480.1"/>
</dbReference>
<dbReference type="GeneID" id="1445446"/>
<dbReference type="KEGG" id="ape:APE_2480.1"/>
<dbReference type="PATRIC" id="fig|272557.25.peg.1648"/>
<dbReference type="eggNOG" id="arCOG01988">
    <property type="taxonomic scope" value="Archaea"/>
</dbReference>
<dbReference type="Proteomes" id="UP000002518">
    <property type="component" value="Chromosome"/>
</dbReference>
<dbReference type="GO" id="GO:0003746">
    <property type="term" value="F:translation elongation factor activity"/>
    <property type="evidence" value="ECO:0007669"/>
    <property type="project" value="UniProtKB-UniRule"/>
</dbReference>
<dbReference type="CDD" id="cd00292">
    <property type="entry name" value="EF1B"/>
    <property type="match status" value="1"/>
</dbReference>
<dbReference type="Gene3D" id="3.30.70.60">
    <property type="match status" value="1"/>
</dbReference>
<dbReference type="HAMAP" id="MF_00043">
    <property type="entry name" value="EF1_beta"/>
    <property type="match status" value="1"/>
</dbReference>
<dbReference type="InterPro" id="IPR036219">
    <property type="entry name" value="eEF-1beta-like_sf"/>
</dbReference>
<dbReference type="InterPro" id="IPR014038">
    <property type="entry name" value="EF1B_bsu/dsu_GNE"/>
</dbReference>
<dbReference type="InterPro" id="IPR014717">
    <property type="entry name" value="Transl_elong_EF1B/ribsomal_bS6"/>
</dbReference>
<dbReference type="InterPro" id="IPR004542">
    <property type="entry name" value="Transl_elong_EF1B_B_arc"/>
</dbReference>
<dbReference type="NCBIfam" id="TIGR00489">
    <property type="entry name" value="aEF-1_beta"/>
    <property type="match status" value="1"/>
</dbReference>
<dbReference type="NCBIfam" id="NF001670">
    <property type="entry name" value="PRK00435.1"/>
    <property type="match status" value="1"/>
</dbReference>
<dbReference type="PANTHER" id="PTHR39647">
    <property type="entry name" value="ELONGATION FACTOR 1-BETA"/>
    <property type="match status" value="1"/>
</dbReference>
<dbReference type="PANTHER" id="PTHR39647:SF1">
    <property type="entry name" value="ELONGATION FACTOR 1-BETA"/>
    <property type="match status" value="1"/>
</dbReference>
<dbReference type="Pfam" id="PF00736">
    <property type="entry name" value="EF1_GNE"/>
    <property type="match status" value="1"/>
</dbReference>
<dbReference type="PIRSF" id="PIRSF006521">
    <property type="entry name" value="Transl_elong_EF1B_B_arc"/>
    <property type="match status" value="1"/>
</dbReference>
<dbReference type="SMART" id="SM00888">
    <property type="entry name" value="EF1_GNE"/>
    <property type="match status" value="1"/>
</dbReference>
<dbReference type="SUPFAM" id="SSF54984">
    <property type="entry name" value="eEF-1beta-like"/>
    <property type="match status" value="1"/>
</dbReference>
<sequence length="90" mass="9885">MARVAVVVKVYPDDVSIDPKTLAERIKSKLPSGYEVLAEGEEPIAFGLKALKLVIAMNEDTEGGTEEVEQLLKNIEGVQEVEVENVSRMQ</sequence>
<evidence type="ECO:0000250" key="1"/>
<evidence type="ECO:0000305" key="2"/>
<name>EF1B_AERPE</name>
<keyword id="KW-0251">Elongation factor</keyword>
<keyword id="KW-0648">Protein biosynthesis</keyword>
<keyword id="KW-1185">Reference proteome</keyword>
<organism>
    <name type="scientific">Aeropyrum pernix (strain ATCC 700893 / DSM 11879 / JCM 9820 / NBRC 100138 / K1)</name>
    <dbReference type="NCBI Taxonomy" id="272557"/>
    <lineage>
        <taxon>Archaea</taxon>
        <taxon>Thermoproteota</taxon>
        <taxon>Thermoprotei</taxon>
        <taxon>Desulfurococcales</taxon>
        <taxon>Desulfurococcaceae</taxon>
        <taxon>Aeropyrum</taxon>
    </lineage>
</organism>
<reference key="1">
    <citation type="journal article" date="1999" name="DNA Res.">
        <title>Complete genome sequence of an aerobic hyper-thermophilic crenarchaeon, Aeropyrum pernix K1.</title>
        <authorList>
            <person name="Kawarabayasi Y."/>
            <person name="Hino Y."/>
            <person name="Horikawa H."/>
            <person name="Yamazaki S."/>
            <person name="Haikawa Y."/>
            <person name="Jin-no K."/>
            <person name="Takahashi M."/>
            <person name="Sekine M."/>
            <person name="Baba S."/>
            <person name="Ankai A."/>
            <person name="Kosugi H."/>
            <person name="Hosoyama A."/>
            <person name="Fukui S."/>
            <person name="Nagai Y."/>
            <person name="Nishijima K."/>
            <person name="Nakazawa H."/>
            <person name="Takamiya M."/>
            <person name="Masuda S."/>
            <person name="Funahashi T."/>
            <person name="Tanaka T."/>
            <person name="Kudoh Y."/>
            <person name="Yamazaki J."/>
            <person name="Kushida N."/>
            <person name="Oguchi A."/>
            <person name="Aoki K."/>
            <person name="Kubota K."/>
            <person name="Nakamura Y."/>
            <person name="Nomura N."/>
            <person name="Sako Y."/>
            <person name="Kikuchi H."/>
        </authorList>
    </citation>
    <scope>NUCLEOTIDE SEQUENCE [LARGE SCALE GENOMIC DNA]</scope>
    <source>
        <strain>ATCC 700893 / DSM 11879 / JCM 9820 / NBRC 100138 / K1</strain>
    </source>
</reference>
<accession>Q9Y904</accession>
<proteinExistence type="inferred from homology"/>
<gene>
    <name type="primary">ef1b</name>
    <name type="ordered locus">APE_2480.1</name>
</gene>